<feature type="chain" id="PRO_0000297986" description="S-ribosylhomocysteine lyase">
    <location>
        <begin position="1"/>
        <end position="157"/>
    </location>
</feature>
<feature type="binding site" evidence="1">
    <location>
        <position position="53"/>
    </location>
    <ligand>
        <name>Fe cation</name>
        <dbReference type="ChEBI" id="CHEBI:24875"/>
    </ligand>
</feature>
<feature type="binding site" evidence="1">
    <location>
        <position position="57"/>
    </location>
    <ligand>
        <name>Fe cation</name>
        <dbReference type="ChEBI" id="CHEBI:24875"/>
    </ligand>
</feature>
<feature type="binding site" evidence="1">
    <location>
        <position position="124"/>
    </location>
    <ligand>
        <name>Fe cation</name>
        <dbReference type="ChEBI" id="CHEBI:24875"/>
    </ligand>
</feature>
<gene>
    <name evidence="1" type="primary">luxS</name>
    <name type="ordered locus">BAPKO_0386</name>
    <name type="ordered locus">BafPKo_0376</name>
</gene>
<keyword id="KW-0071">Autoinducer synthesis</keyword>
<keyword id="KW-0408">Iron</keyword>
<keyword id="KW-0456">Lyase</keyword>
<keyword id="KW-0479">Metal-binding</keyword>
<keyword id="KW-0673">Quorum sensing</keyword>
<proteinExistence type="inferred from homology"/>
<evidence type="ECO:0000255" key="1">
    <source>
        <dbReference type="HAMAP-Rule" id="MF_00091"/>
    </source>
</evidence>
<reference key="1">
    <citation type="journal article" date="2006" name="BMC Genomics">
        <title>Comparative genome analysis: selection pressure on the Borrelia vls cassettes is essential for infectivity.</title>
        <authorList>
            <person name="Gloeckner G."/>
            <person name="Schulte-Spechtel U."/>
            <person name="Schilhabel M."/>
            <person name="Felder M."/>
            <person name="Suehnel J."/>
            <person name="Wilske B."/>
            <person name="Platzer M."/>
        </authorList>
    </citation>
    <scope>NUCLEOTIDE SEQUENCE [LARGE SCALE GENOMIC DNA]</scope>
    <source>
        <strain>PKo</strain>
    </source>
</reference>
<reference key="2">
    <citation type="journal article" date="2011" name="J. Bacteriol.">
        <title>Whole-genome sequences of two Borrelia afzelii and two Borrelia garinii Lyme disease agent isolates.</title>
        <authorList>
            <person name="Casjens S.R."/>
            <person name="Mongodin E.F."/>
            <person name="Qiu W.G."/>
            <person name="Dunn J.J."/>
            <person name="Luft B.J."/>
            <person name="Fraser-Liggett C.M."/>
            <person name="Schutzer S.E."/>
        </authorList>
    </citation>
    <scope>NUCLEOTIDE SEQUENCE [LARGE SCALE GENOMIC DNA]</scope>
    <source>
        <strain>PKo</strain>
    </source>
</reference>
<accession>Q0SND6</accession>
<accession>G0IS21</accession>
<dbReference type="EC" id="4.4.1.21" evidence="1"/>
<dbReference type="EMBL" id="CP000395">
    <property type="protein sequence ID" value="ABH01642.1"/>
    <property type="molecule type" value="Genomic_DNA"/>
</dbReference>
<dbReference type="EMBL" id="CP002933">
    <property type="protein sequence ID" value="AEL69602.1"/>
    <property type="molecule type" value="Genomic_DNA"/>
</dbReference>
<dbReference type="RefSeq" id="WP_004790298.1">
    <property type="nucleotide sequence ID" value="NZ_CP160066.1"/>
</dbReference>
<dbReference type="SMR" id="Q0SND6"/>
<dbReference type="STRING" id="29518.BLA32_02430"/>
<dbReference type="KEGG" id="baf:BAPKO_0386"/>
<dbReference type="KEGG" id="bafz:BafPKo_0376"/>
<dbReference type="PATRIC" id="fig|390236.22.peg.369"/>
<dbReference type="eggNOG" id="COG1854">
    <property type="taxonomic scope" value="Bacteria"/>
</dbReference>
<dbReference type="HOGENOM" id="CLU_107531_1_0_12"/>
<dbReference type="OrthoDB" id="9788129at2"/>
<dbReference type="Proteomes" id="UP000005216">
    <property type="component" value="Chromosome"/>
</dbReference>
<dbReference type="GO" id="GO:0005506">
    <property type="term" value="F:iron ion binding"/>
    <property type="evidence" value="ECO:0007669"/>
    <property type="project" value="InterPro"/>
</dbReference>
<dbReference type="GO" id="GO:0043768">
    <property type="term" value="F:S-ribosylhomocysteine lyase activity"/>
    <property type="evidence" value="ECO:0007669"/>
    <property type="project" value="UniProtKB-UniRule"/>
</dbReference>
<dbReference type="GO" id="GO:0009372">
    <property type="term" value="P:quorum sensing"/>
    <property type="evidence" value="ECO:0007669"/>
    <property type="project" value="UniProtKB-UniRule"/>
</dbReference>
<dbReference type="Gene3D" id="3.30.1360.80">
    <property type="entry name" value="S-ribosylhomocysteinase (LuxS)"/>
    <property type="match status" value="1"/>
</dbReference>
<dbReference type="HAMAP" id="MF_00091">
    <property type="entry name" value="LuxS"/>
    <property type="match status" value="1"/>
</dbReference>
<dbReference type="InterPro" id="IPR037005">
    <property type="entry name" value="LuxS_sf"/>
</dbReference>
<dbReference type="InterPro" id="IPR011249">
    <property type="entry name" value="Metalloenz_LuxS/M16"/>
</dbReference>
<dbReference type="InterPro" id="IPR003815">
    <property type="entry name" value="S-ribosylhomocysteinase"/>
</dbReference>
<dbReference type="NCBIfam" id="NF002604">
    <property type="entry name" value="PRK02260.1-4"/>
    <property type="match status" value="1"/>
</dbReference>
<dbReference type="PANTHER" id="PTHR35799">
    <property type="entry name" value="S-RIBOSYLHOMOCYSTEINE LYASE"/>
    <property type="match status" value="1"/>
</dbReference>
<dbReference type="PANTHER" id="PTHR35799:SF1">
    <property type="entry name" value="S-RIBOSYLHOMOCYSTEINE LYASE"/>
    <property type="match status" value="1"/>
</dbReference>
<dbReference type="Pfam" id="PF02664">
    <property type="entry name" value="LuxS"/>
    <property type="match status" value="1"/>
</dbReference>
<dbReference type="PIRSF" id="PIRSF006160">
    <property type="entry name" value="AI2"/>
    <property type="match status" value="1"/>
</dbReference>
<dbReference type="PRINTS" id="PR01487">
    <property type="entry name" value="LUXSPROTEIN"/>
</dbReference>
<dbReference type="SUPFAM" id="SSF63411">
    <property type="entry name" value="LuxS/MPP-like metallohydrolase"/>
    <property type="match status" value="1"/>
</dbReference>
<organism>
    <name type="scientific">Borreliella afzelii (strain PKo)</name>
    <name type="common">Borrelia afzelii</name>
    <dbReference type="NCBI Taxonomy" id="390236"/>
    <lineage>
        <taxon>Bacteria</taxon>
        <taxon>Pseudomonadati</taxon>
        <taxon>Spirochaetota</taxon>
        <taxon>Spirochaetia</taxon>
        <taxon>Spirochaetales</taxon>
        <taxon>Borreliaceae</taxon>
        <taxon>Borreliella</taxon>
    </lineage>
</organism>
<name>LUXS_BORAP</name>
<comment type="function">
    <text evidence="1">Involved in the synthesis of autoinducer 2 (AI-2) which is secreted by bacteria and is used to communicate both the cell density and the metabolic potential of the environment. The regulation of gene expression in response to changes in cell density is called quorum sensing. Catalyzes the transformation of S-ribosylhomocysteine (RHC) to homocysteine (HC) and 4,5-dihydroxy-2,3-pentadione (DPD).</text>
</comment>
<comment type="catalytic activity">
    <reaction evidence="1">
        <text>S-(5-deoxy-D-ribos-5-yl)-L-homocysteine = (S)-4,5-dihydroxypentane-2,3-dione + L-homocysteine</text>
        <dbReference type="Rhea" id="RHEA:17753"/>
        <dbReference type="ChEBI" id="CHEBI:29484"/>
        <dbReference type="ChEBI" id="CHEBI:58195"/>
        <dbReference type="ChEBI" id="CHEBI:58199"/>
        <dbReference type="EC" id="4.4.1.21"/>
    </reaction>
</comment>
<comment type="cofactor">
    <cofactor evidence="1">
        <name>Fe cation</name>
        <dbReference type="ChEBI" id="CHEBI:24875"/>
    </cofactor>
    <text evidence="1">Binds 1 Fe cation per subunit.</text>
</comment>
<comment type="subunit">
    <text evidence="1">Homodimer.</text>
</comment>
<comment type="similarity">
    <text evidence="1">Belongs to the LuxS family.</text>
</comment>
<protein>
    <recommendedName>
        <fullName evidence="1">S-ribosylhomocysteine lyase</fullName>
        <ecNumber evidence="1">4.4.1.21</ecNumber>
    </recommendedName>
    <alternativeName>
        <fullName evidence="1">AI-2 synthesis protein</fullName>
    </alternativeName>
    <alternativeName>
        <fullName evidence="1">Autoinducer-2 production protein LuxS</fullName>
    </alternativeName>
</protein>
<sequence length="157" mass="18117">MKKITSFTIDHTKLNPGIYVSRKDTFENVIFTTIDIRIKAPNIEPIIENAAIHTIEHIGATLLRNNEVWAEKIVYFGPMGCRTGFYLIIFGNYESKDLIDLISWLFSEIVNFSEPIPGASHKECGNYKEHNLDMAKYESSKYLQILNNIKEENLKYP</sequence>